<reference key="1">
    <citation type="journal article" date="1994" name="DNA Cell Biol.">
        <title>The Surf-1 and Surf-2 genes and their essential bidirectional promoter elements are conserved between mouse and human.</title>
        <authorList>
            <person name="Lennard A."/>
            <person name="Gaston K."/>
            <person name="Fried M."/>
        </authorList>
    </citation>
    <scope>NUCLEOTIDE SEQUENCE [MRNA] (ISOFORM 1)</scope>
</reference>
<reference key="2">
    <citation type="journal article" date="2004" name="Nat. Genet.">
        <title>Complete sequencing and characterization of 21,243 full-length human cDNAs.</title>
        <authorList>
            <person name="Ota T."/>
            <person name="Suzuki Y."/>
            <person name="Nishikawa T."/>
            <person name="Otsuki T."/>
            <person name="Sugiyama T."/>
            <person name="Irie R."/>
            <person name="Wakamatsu A."/>
            <person name="Hayashi K."/>
            <person name="Sato H."/>
            <person name="Nagai K."/>
            <person name="Kimura K."/>
            <person name="Makita H."/>
            <person name="Sekine M."/>
            <person name="Obayashi M."/>
            <person name="Nishi T."/>
            <person name="Shibahara T."/>
            <person name="Tanaka T."/>
            <person name="Ishii S."/>
            <person name="Yamamoto J."/>
            <person name="Saito K."/>
            <person name="Kawai Y."/>
            <person name="Isono Y."/>
            <person name="Nakamura Y."/>
            <person name="Nagahari K."/>
            <person name="Murakami K."/>
            <person name="Yasuda T."/>
            <person name="Iwayanagi T."/>
            <person name="Wagatsuma M."/>
            <person name="Shiratori A."/>
            <person name="Sudo H."/>
            <person name="Hosoiri T."/>
            <person name="Kaku Y."/>
            <person name="Kodaira H."/>
            <person name="Kondo H."/>
            <person name="Sugawara M."/>
            <person name="Takahashi M."/>
            <person name="Kanda K."/>
            <person name="Yokoi T."/>
            <person name="Furuya T."/>
            <person name="Kikkawa E."/>
            <person name="Omura Y."/>
            <person name="Abe K."/>
            <person name="Kamihara K."/>
            <person name="Katsuta N."/>
            <person name="Sato K."/>
            <person name="Tanikawa M."/>
            <person name="Yamazaki M."/>
            <person name="Ninomiya K."/>
            <person name="Ishibashi T."/>
            <person name="Yamashita H."/>
            <person name="Murakawa K."/>
            <person name="Fujimori K."/>
            <person name="Tanai H."/>
            <person name="Kimata M."/>
            <person name="Watanabe M."/>
            <person name="Hiraoka S."/>
            <person name="Chiba Y."/>
            <person name="Ishida S."/>
            <person name="Ono Y."/>
            <person name="Takiguchi S."/>
            <person name="Watanabe S."/>
            <person name="Yosida M."/>
            <person name="Hotuta T."/>
            <person name="Kusano J."/>
            <person name="Kanehori K."/>
            <person name="Takahashi-Fujii A."/>
            <person name="Hara H."/>
            <person name="Tanase T.-O."/>
            <person name="Nomura Y."/>
            <person name="Togiya S."/>
            <person name="Komai F."/>
            <person name="Hara R."/>
            <person name="Takeuchi K."/>
            <person name="Arita M."/>
            <person name="Imose N."/>
            <person name="Musashino K."/>
            <person name="Yuuki H."/>
            <person name="Oshima A."/>
            <person name="Sasaki N."/>
            <person name="Aotsuka S."/>
            <person name="Yoshikawa Y."/>
            <person name="Matsunawa H."/>
            <person name="Ichihara T."/>
            <person name="Shiohata N."/>
            <person name="Sano S."/>
            <person name="Moriya S."/>
            <person name="Momiyama H."/>
            <person name="Satoh N."/>
            <person name="Takami S."/>
            <person name="Terashima Y."/>
            <person name="Suzuki O."/>
            <person name="Nakagawa S."/>
            <person name="Senoh A."/>
            <person name="Mizoguchi H."/>
            <person name="Goto Y."/>
            <person name="Shimizu F."/>
            <person name="Wakebe H."/>
            <person name="Hishigaki H."/>
            <person name="Watanabe T."/>
            <person name="Sugiyama A."/>
            <person name="Takemoto M."/>
            <person name="Kawakami B."/>
            <person name="Yamazaki M."/>
            <person name="Watanabe K."/>
            <person name="Kumagai A."/>
            <person name="Itakura S."/>
            <person name="Fukuzumi Y."/>
            <person name="Fujimori Y."/>
            <person name="Komiyama M."/>
            <person name="Tashiro H."/>
            <person name="Tanigami A."/>
            <person name="Fujiwara T."/>
            <person name="Ono T."/>
            <person name="Yamada K."/>
            <person name="Fujii Y."/>
            <person name="Ozaki K."/>
            <person name="Hirao M."/>
            <person name="Ohmori Y."/>
            <person name="Kawabata A."/>
            <person name="Hikiji T."/>
            <person name="Kobatake N."/>
            <person name="Inagaki H."/>
            <person name="Ikema Y."/>
            <person name="Okamoto S."/>
            <person name="Okitani R."/>
            <person name="Kawakami T."/>
            <person name="Noguchi S."/>
            <person name="Itoh T."/>
            <person name="Shigeta K."/>
            <person name="Senba T."/>
            <person name="Matsumura K."/>
            <person name="Nakajima Y."/>
            <person name="Mizuno T."/>
            <person name="Morinaga M."/>
            <person name="Sasaki M."/>
            <person name="Togashi T."/>
            <person name="Oyama M."/>
            <person name="Hata H."/>
            <person name="Watanabe M."/>
            <person name="Komatsu T."/>
            <person name="Mizushima-Sugano J."/>
            <person name="Satoh T."/>
            <person name="Shirai Y."/>
            <person name="Takahashi Y."/>
            <person name="Nakagawa K."/>
            <person name="Okumura K."/>
            <person name="Nagase T."/>
            <person name="Nomura N."/>
            <person name="Kikuchi H."/>
            <person name="Masuho Y."/>
            <person name="Yamashita R."/>
            <person name="Nakai K."/>
            <person name="Yada T."/>
            <person name="Nakamura Y."/>
            <person name="Ohara O."/>
            <person name="Isogai T."/>
            <person name="Sugano S."/>
        </authorList>
    </citation>
    <scope>NUCLEOTIDE SEQUENCE [LARGE SCALE MRNA] (ISOFORM 1)</scope>
</reference>
<reference key="3">
    <citation type="journal article" date="2004" name="Nature">
        <title>DNA sequence and analysis of human chromosome 9.</title>
        <authorList>
            <person name="Humphray S.J."/>
            <person name="Oliver K."/>
            <person name="Hunt A.R."/>
            <person name="Plumb R.W."/>
            <person name="Loveland J.E."/>
            <person name="Howe K.L."/>
            <person name="Andrews T.D."/>
            <person name="Searle S."/>
            <person name="Hunt S.E."/>
            <person name="Scott C.E."/>
            <person name="Jones M.C."/>
            <person name="Ainscough R."/>
            <person name="Almeida J.P."/>
            <person name="Ambrose K.D."/>
            <person name="Ashwell R.I.S."/>
            <person name="Babbage A.K."/>
            <person name="Babbage S."/>
            <person name="Bagguley C.L."/>
            <person name="Bailey J."/>
            <person name="Banerjee R."/>
            <person name="Barker D.J."/>
            <person name="Barlow K.F."/>
            <person name="Bates K."/>
            <person name="Beasley H."/>
            <person name="Beasley O."/>
            <person name="Bird C.P."/>
            <person name="Bray-Allen S."/>
            <person name="Brown A.J."/>
            <person name="Brown J.Y."/>
            <person name="Burford D."/>
            <person name="Burrill W."/>
            <person name="Burton J."/>
            <person name="Carder C."/>
            <person name="Carter N.P."/>
            <person name="Chapman J.C."/>
            <person name="Chen Y."/>
            <person name="Clarke G."/>
            <person name="Clark S.Y."/>
            <person name="Clee C.M."/>
            <person name="Clegg S."/>
            <person name="Collier R.E."/>
            <person name="Corby N."/>
            <person name="Crosier M."/>
            <person name="Cummings A.T."/>
            <person name="Davies J."/>
            <person name="Dhami P."/>
            <person name="Dunn M."/>
            <person name="Dutta I."/>
            <person name="Dyer L.W."/>
            <person name="Earthrowl M.E."/>
            <person name="Faulkner L."/>
            <person name="Fleming C.J."/>
            <person name="Frankish A."/>
            <person name="Frankland J.A."/>
            <person name="French L."/>
            <person name="Fricker D.G."/>
            <person name="Garner P."/>
            <person name="Garnett J."/>
            <person name="Ghori J."/>
            <person name="Gilbert J.G.R."/>
            <person name="Glison C."/>
            <person name="Grafham D.V."/>
            <person name="Gribble S."/>
            <person name="Griffiths C."/>
            <person name="Griffiths-Jones S."/>
            <person name="Grocock R."/>
            <person name="Guy J."/>
            <person name="Hall R.E."/>
            <person name="Hammond S."/>
            <person name="Harley J.L."/>
            <person name="Harrison E.S.I."/>
            <person name="Hart E.A."/>
            <person name="Heath P.D."/>
            <person name="Henderson C.D."/>
            <person name="Hopkins B.L."/>
            <person name="Howard P.J."/>
            <person name="Howden P.J."/>
            <person name="Huckle E."/>
            <person name="Johnson C."/>
            <person name="Johnson D."/>
            <person name="Joy A.A."/>
            <person name="Kay M."/>
            <person name="Keenan S."/>
            <person name="Kershaw J.K."/>
            <person name="Kimberley A.M."/>
            <person name="King A."/>
            <person name="Knights A."/>
            <person name="Laird G.K."/>
            <person name="Langford C."/>
            <person name="Lawlor S."/>
            <person name="Leongamornlert D.A."/>
            <person name="Leversha M."/>
            <person name="Lloyd C."/>
            <person name="Lloyd D.M."/>
            <person name="Lovell J."/>
            <person name="Martin S."/>
            <person name="Mashreghi-Mohammadi M."/>
            <person name="Matthews L."/>
            <person name="McLaren S."/>
            <person name="McLay K.E."/>
            <person name="McMurray A."/>
            <person name="Milne S."/>
            <person name="Nickerson T."/>
            <person name="Nisbett J."/>
            <person name="Nordsiek G."/>
            <person name="Pearce A.V."/>
            <person name="Peck A.I."/>
            <person name="Porter K.M."/>
            <person name="Pandian R."/>
            <person name="Pelan S."/>
            <person name="Phillimore B."/>
            <person name="Povey S."/>
            <person name="Ramsey Y."/>
            <person name="Rand V."/>
            <person name="Scharfe M."/>
            <person name="Sehra H.K."/>
            <person name="Shownkeen R."/>
            <person name="Sims S.K."/>
            <person name="Skuce C.D."/>
            <person name="Smith M."/>
            <person name="Steward C.A."/>
            <person name="Swarbreck D."/>
            <person name="Sycamore N."/>
            <person name="Tester J."/>
            <person name="Thorpe A."/>
            <person name="Tracey A."/>
            <person name="Tromans A."/>
            <person name="Thomas D.W."/>
            <person name="Wall M."/>
            <person name="Wallis J.M."/>
            <person name="West A.P."/>
            <person name="Whitehead S.L."/>
            <person name="Willey D.L."/>
            <person name="Williams S.A."/>
            <person name="Wilming L."/>
            <person name="Wray P.W."/>
            <person name="Young L."/>
            <person name="Ashurst J.L."/>
            <person name="Coulson A."/>
            <person name="Blocker H."/>
            <person name="Durbin R.M."/>
            <person name="Sulston J.E."/>
            <person name="Hubbard T."/>
            <person name="Jackson M.J."/>
            <person name="Bentley D.R."/>
            <person name="Beck S."/>
            <person name="Rogers J."/>
            <person name="Dunham I."/>
        </authorList>
    </citation>
    <scope>NUCLEOTIDE SEQUENCE [LARGE SCALE GENOMIC DNA]</scope>
</reference>
<reference key="4">
    <citation type="journal article" date="2004" name="Genome Res.">
        <title>The status, quality, and expansion of the NIH full-length cDNA project: the Mammalian Gene Collection (MGC).</title>
        <authorList>
            <consortium name="The MGC Project Team"/>
        </authorList>
    </citation>
    <scope>NUCLEOTIDE SEQUENCE [LARGE SCALE MRNA] (ISOFORM 1)</scope>
    <source>
        <tissue>Colon</tissue>
        <tissue>Kidney</tissue>
        <tissue>Skin</tissue>
        <tissue>Stomach</tissue>
    </source>
</reference>
<reference key="5">
    <citation type="journal article" date="1998" name="Nat. Genet.">
        <title>SURF1, encoding a factor involved in the biogenesis of cytochrome c oxidase, is mutated in Leigh syndrome.</title>
        <authorList>
            <person name="Zhu Z."/>
            <person name="Yao J."/>
            <person name="Johns T."/>
            <person name="Fu K."/>
            <person name="de Bie I."/>
            <person name="Macmillan C."/>
            <person name="Cuthbert A.P."/>
            <person name="Newbold R.F."/>
            <person name="Wang J."/>
            <person name="Chevrette M."/>
            <person name="Brown G.K."/>
            <person name="Brown R.M."/>
            <person name="Shoubridge E.A."/>
        </authorList>
    </citation>
    <scope>POSSIBLE FUNCTION</scope>
    <scope>INVOLVEMENT IN MC4DN1</scope>
</reference>
<reference key="6">
    <citation type="journal article" date="2001" name="Hum. Mutat.">
        <title>Mutations in the SURF1 gene associated with Leigh syndrome and cytochrome C oxidase deficiency.</title>
        <authorList>
            <person name="Pequignot M.O."/>
            <person name="Dey R."/>
            <person name="Zeviani M."/>
            <person name="Tiranti V."/>
            <person name="Godinot C."/>
            <person name="Poyau A."/>
            <person name="Sue C."/>
            <person name="Di Mauro S."/>
            <person name="Abitbol M."/>
            <person name="Marsac C."/>
        </authorList>
    </citation>
    <scope>REVIEW</scope>
    <scope>VARIANT MC4DN1 ARG-124</scope>
</reference>
<reference key="7">
    <citation type="journal article" date="2015" name="Cell Rep.">
        <title>MITRAC7 acts as a COX1-specific chaperone and reveals a checkpoint during cytochrome c oxidase assembly.</title>
        <authorList>
            <person name="Dennerlein S."/>
            <person name="Oeljeklaus S."/>
            <person name="Jans D."/>
            <person name="Hellwig C."/>
            <person name="Bareth B."/>
            <person name="Jakobs S."/>
            <person name="Deckers M."/>
            <person name="Warscheid B."/>
            <person name="Rehling P."/>
        </authorList>
    </citation>
    <scope>FUNCTION</scope>
    <scope>INTERACTION WITH COA3</scope>
</reference>
<reference key="8">
    <citation type="journal article" date="2015" name="Proteomics">
        <title>N-terminome analysis of the human mitochondrial proteome.</title>
        <authorList>
            <person name="Vaca Jacome A.S."/>
            <person name="Rabilloud T."/>
            <person name="Schaeffer-Reiss C."/>
            <person name="Rompais M."/>
            <person name="Ayoub D."/>
            <person name="Lane L."/>
            <person name="Bairoch A."/>
            <person name="Van Dorsselaer A."/>
            <person name="Carapito C."/>
        </authorList>
    </citation>
    <scope>IDENTIFICATION BY MASS SPECTROMETRY [LARGE SCALE ANALYSIS]</scope>
</reference>
<reference key="9">
    <citation type="journal article" date="1999" name="Biochem. Biophys. Res. Commun.">
        <title>SURFEIT-1 gene analysis and two-dimensional blue native gel electrophoresis in cytochrome c oxidase deficiency.</title>
        <authorList>
            <person name="Coenen M.J."/>
            <person name="van den Heuvel L.P."/>
            <person name="Nijtmans L.G."/>
            <person name="Morava E."/>
            <person name="Marquardt I."/>
            <person name="Girschick H.J."/>
            <person name="Trijbels F.J."/>
            <person name="Grivell L.A."/>
            <person name="Smeitink J.A."/>
        </authorList>
    </citation>
    <scope>VARIANT MC4DN1 ARG-124</scope>
</reference>
<reference key="10">
    <citation type="journal article" date="2000" name="Hum. Genet.">
        <title>Missense mutations in SURF1 associated with deficient cytochrome c oxidase assembly in Leigh syndrome patients.</title>
        <authorList>
            <person name="Poyau A."/>
            <person name="Buchet K."/>
            <person name="Bouzidi M.F."/>
            <person name="Zabot M.-T."/>
            <person name="Echenne B."/>
            <person name="Yao J."/>
            <person name="Shoubridge E.A."/>
            <person name="Godinot C."/>
        </authorList>
    </citation>
    <scope>VARIANTS MC4DN1 GLU-124 AND THR-246</scope>
    <scope>VARIANT HIS-202</scope>
</reference>
<reference key="11">
    <citation type="journal article" date="1999" name="Hum. Genet.">
        <title>Two novel mutations of SURF1 in Leigh syndrome with cytochrome c oxidase deficiency.</title>
        <authorList>
            <person name="Teraoka M."/>
            <person name="Yokoyama Y."/>
            <person name="Ninomiya S."/>
            <person name="Inoue C."/>
            <person name="Yamashita S."/>
            <person name="Seino Y."/>
        </authorList>
    </citation>
    <scope>VARIANT MC4DN1 ASP-274</scope>
</reference>
<reference key="12">
    <citation type="journal article" date="2001" name="J. Appl. Genet.">
        <title>SURF1 gene mutations in Polish patients with COX-deficient Leigh syndrome.</title>
        <authorList>
            <person name="Piekutowska-Abramczuk D."/>
            <person name="Popowska E."/>
            <person name="Pronicka E."/>
            <person name="Karczmarewicz E."/>
            <person name="Pronicki M."/>
            <person name="Kmiec T."/>
            <person name="Krajewska-Walasek M."/>
        </authorList>
    </citation>
    <scope>VARIANT MC4DN1 THR-235</scope>
</reference>
<reference key="13">
    <citation type="journal article" date="2004" name="Mitochondrion">
        <title>Pathogenicity of missense mutations in SURF1 deficiency inducing the Leigh syndrome. Importance in diagnosis.</title>
        <authorList>
            <person name="Dubot A."/>
            <person name="Hervouet E."/>
            <person name="Mandon G."/>
            <person name="Zabot M.T."/>
            <person name="Godinot C."/>
        </authorList>
    </citation>
    <scope>DEVELOPMENTAL STAGE</scope>
    <scope>VARIANTS MC4DN1 GLU-124 AND THR-246</scope>
    <scope>VARIANT HIS-202</scope>
    <scope>CHARACTERIZATION OF VARIANTS MC4DN1 GLU-124 AND THR-246</scope>
    <scope>CHARACTERIZATION OF VARIANT HIS-202</scope>
</reference>
<reference key="14">
    <citation type="journal article" date="2006" name="Science">
        <title>The consensus coding sequences of human breast and colorectal cancers.</title>
        <authorList>
            <person name="Sjoeblom T."/>
            <person name="Jones S."/>
            <person name="Wood L.D."/>
            <person name="Parsons D.W."/>
            <person name="Lin J."/>
            <person name="Barber T.D."/>
            <person name="Mandelker D."/>
            <person name="Leary R.J."/>
            <person name="Ptak J."/>
            <person name="Silliman N."/>
            <person name="Szabo S."/>
            <person name="Buckhaults P."/>
            <person name="Farrell C."/>
            <person name="Meeh P."/>
            <person name="Markowitz S.D."/>
            <person name="Willis J."/>
            <person name="Dawson D."/>
            <person name="Willson J.K.V."/>
            <person name="Gazdar A.F."/>
            <person name="Hartigan J."/>
            <person name="Wu L."/>
            <person name="Liu C."/>
            <person name="Parmigiani G."/>
            <person name="Park B.H."/>
            <person name="Bachman K.E."/>
            <person name="Papadopoulos N."/>
            <person name="Vogelstein B."/>
            <person name="Kinzler K.W."/>
            <person name="Velculescu V.E."/>
        </authorList>
    </citation>
    <scope>VARIANT [LARGE SCALE ANALYSIS] LYS-89</scope>
</reference>
<reference key="15">
    <citation type="journal article" date="2011" name="Nature">
        <title>Deep sequencing reveals 50 novel genes for recessive cognitive disorders.</title>
        <authorList>
            <person name="Najmabadi H."/>
            <person name="Hu H."/>
            <person name="Garshasbi M."/>
            <person name="Zemojtel T."/>
            <person name="Abedini S.S."/>
            <person name="Chen W."/>
            <person name="Hosseini M."/>
            <person name="Behjati F."/>
            <person name="Haas S."/>
            <person name="Jamali P."/>
            <person name="Zecha A."/>
            <person name="Mohseni M."/>
            <person name="Puettmann L."/>
            <person name="Vahid L.N."/>
            <person name="Jensen C."/>
            <person name="Moheb L.A."/>
            <person name="Bienek M."/>
            <person name="Larti F."/>
            <person name="Mueller I."/>
            <person name="Weissmann R."/>
            <person name="Darvish H."/>
            <person name="Wrogemann K."/>
            <person name="Hadavi V."/>
            <person name="Lipkowitz B."/>
            <person name="Esmaeeli-Nieh S."/>
            <person name="Wieczorek D."/>
            <person name="Kariminejad R."/>
            <person name="Firouzabadi S.G."/>
            <person name="Cohen M."/>
            <person name="Fattahi Z."/>
            <person name="Rost I."/>
            <person name="Mojahedi F."/>
            <person name="Hertzberg C."/>
            <person name="Dehghan A."/>
            <person name="Rajab A."/>
            <person name="Banavandi M.J."/>
            <person name="Hoffer J."/>
            <person name="Falah M."/>
            <person name="Musante L."/>
            <person name="Kalscheuer V."/>
            <person name="Ullmann R."/>
            <person name="Kuss A.W."/>
            <person name="Tzschach A."/>
            <person name="Kahrizi K."/>
            <person name="Ropers H.H."/>
        </authorList>
    </citation>
    <scope>VARIANT MC4DN1 ARG-227</scope>
</reference>
<reference key="16">
    <citation type="journal article" date="2012" name="Brain Dev.">
        <title>Two Japanese patients with Leigh syndrome caused by novel SURF1 mutations.</title>
        <authorList>
            <person name="Tanigawa J."/>
            <person name="Kaneko K."/>
            <person name="Honda M."/>
            <person name="Harashima H."/>
            <person name="Murayama K."/>
            <person name="Wada T."/>
            <person name="Takano K."/>
            <person name="Iai M."/>
            <person name="Yamashita S."/>
            <person name="Shimbo H."/>
            <person name="Aida N."/>
            <person name="Ohtake A."/>
            <person name="Osaka H."/>
        </authorList>
    </citation>
    <scope>VARIANT MC4DN1 ASP-248</scope>
</reference>
<reference key="17">
    <citation type="journal article" date="2012" name="Hum. Mutat.">
        <title>SURF1-associated leigh syndrome: A case series and novel mutations.</title>
        <authorList>
            <person name="Lee I.C."/>
            <person name="El-Hattab A.W."/>
            <person name="Wang J."/>
            <person name="Li F.Y."/>
            <person name="Weng S.W."/>
            <person name="Craigen W.J."/>
            <person name="Wong L.J."/>
        </authorList>
    </citation>
    <scope>VARIANTS MC4DN1 GLY-56; PRO-90; GLY-177; GLU-205 AND ARG-257</scope>
</reference>
<reference key="18">
    <citation type="journal article" date="2013" name="Neurology">
        <title>SURF1 deficiency causes demyelinating Charcot-Marie-Tooth disease.</title>
        <authorList>
            <person name="Echaniz-Laguna A."/>
            <person name="Ghezzi D."/>
            <person name="Chassagne M."/>
            <person name="Mayencon M."/>
            <person name="Padet S."/>
            <person name="Melchionda L."/>
            <person name="Rouvet I."/>
            <person name="Lannes B."/>
            <person name="Bozon D."/>
            <person name="Latour P."/>
            <person name="Zeviani M."/>
            <person name="Mousson de Camaret B."/>
        </authorList>
    </citation>
    <scope>VARIANT CMT4K TRP-192</scope>
    <scope>FUNCTION</scope>
</reference>
<reference key="19">
    <citation type="journal article" date="2015" name="Arch. Iran. Med.">
        <title>Exome Sequencing and Linkage Analysis Identified Novel Candidate Genes in Recessive Intellectual Disability Associated with Ataxia.</title>
        <authorList>
            <person name="Jazayeri R."/>
            <person name="Hu H."/>
            <person name="Fattahi Z."/>
            <person name="Musante L."/>
            <person name="Abedini S.S."/>
            <person name="Hosseini M."/>
            <person name="Wienker T.F."/>
            <person name="Ropers H.H."/>
            <person name="Najmabadi H."/>
            <person name="Kahrizi K."/>
        </authorList>
    </citation>
    <scope>VARIANT MC4DN1 VAL-257</scope>
</reference>
<reference key="20">
    <citation type="journal article" date="2018" name="Gene">
        <title>SURF1 mutations in Chinese patients with Leigh syndrome: Novel mutations, mutation spectrum, and the functional consequences.</title>
        <authorList>
            <person name="Li Y."/>
            <person name="Wen S."/>
            <person name="Li D."/>
            <person name="Xie J."/>
            <person name="Wei X."/>
            <person name="Li X."/>
            <person name="Liu Y."/>
            <person name="Fang H."/>
            <person name="Yang Y."/>
            <person name="Lyu J."/>
        </authorList>
    </citation>
    <scope>VARIANTS MC4DN1 TYR-178 AND HIS-LEU-GLN-TYR-GLU-270 INS</scope>
    <scope>CHARACTERIZATION OF VARIANTS MC4DN1 TYR-178; SER-258 AND HIS-LEU-GLN-TYR-GLU-270 INS</scope>
</reference>
<reference key="21">
    <citation type="journal article" date="2018" name="Endocrinol. Exp.">
        <title>Mutations in SURF1 are important genetic causes of Leigh syndrome in Slovak patients.</title>
        <authorList>
            <person name="Danis D."/>
            <person name="Brennerova K."/>
            <person name="Skopkova M."/>
            <person name="Kurdiova T."/>
            <person name="Ukropec J."/>
            <person name="Stanik J."/>
            <person name="Kolnikova M."/>
            <person name="Gasperikova D."/>
        </authorList>
    </citation>
    <scope>VARIANT MC4DN1 105-LEU--VAL-300 DEL</scope>
</reference>
<accession>Q15526</accession>
<accession>Q5T8T3</accession>
<accession>Q5T8T4</accession>
<organism>
    <name type="scientific">Homo sapiens</name>
    <name type="common">Human</name>
    <dbReference type="NCBI Taxonomy" id="9606"/>
    <lineage>
        <taxon>Eukaryota</taxon>
        <taxon>Metazoa</taxon>
        <taxon>Chordata</taxon>
        <taxon>Craniata</taxon>
        <taxon>Vertebrata</taxon>
        <taxon>Euteleostomi</taxon>
        <taxon>Mammalia</taxon>
        <taxon>Eutheria</taxon>
        <taxon>Euarchontoglires</taxon>
        <taxon>Primates</taxon>
        <taxon>Haplorrhini</taxon>
        <taxon>Catarrhini</taxon>
        <taxon>Hominidae</taxon>
        <taxon>Homo</taxon>
    </lineage>
</organism>
<sequence length="300" mass="33331">MAAVAALQLGLRAAGLGRAPASAAWRSVLRVSPRPGVAWRPSRCGSSAAEASATKAEDDSFLQWVLLLIPVTAFGLGTWQVQRRKWKLNLIAELESRVLAEPVPLPADPMELKNLEYRPVKVRGCFDHSKELYMMPRTMVDPVREAREGGLISSSTQSGAYVVTPFHCTDLGVTILVNRGFVPRKKVNPETRQKGQIEGEVDLIGMVRLTETRQPFVPENNPERNHWHYRDLEAMARITGAEPIFIDANFQSTVPGGPIGGQTRVTLRNEHLQYIVTWYGLSAATSYLWFKKFLRGTPGV</sequence>
<feature type="chain" id="PRO_0000215652" description="Surfeit locus protein 1">
    <location>
        <begin position="1"/>
        <end position="300"/>
    </location>
</feature>
<feature type="transmembrane region" description="Helical" evidence="2">
    <location>
        <begin position="61"/>
        <end position="79"/>
    </location>
</feature>
<feature type="transmembrane region" description="Helical" evidence="2">
    <location>
        <begin position="274"/>
        <end position="290"/>
    </location>
</feature>
<feature type="splice variant" id="VSP_034817" description="In isoform 2." evidence="19">
    <location>
        <begin position="173"/>
        <end position="184"/>
    </location>
</feature>
<feature type="sequence variant" id="VAR_068648" description="In MC4DN1; benign; dbSNP:rs116779216." evidence="12">
    <original>A</original>
    <variation>G</variation>
    <location>
        <position position="56"/>
    </location>
</feature>
<feature type="sequence variant" id="VAR_036340" description="In a breast cancer sample; somatic mutation." evidence="9">
    <original>N</original>
    <variation>K</variation>
    <location>
        <position position="89"/>
    </location>
</feature>
<feature type="sequence variant" id="VAR_068649" description="In MC4DN1; dbSNP:rs782024654." evidence="12">
    <original>L</original>
    <variation>P</variation>
    <location>
        <position position="90"/>
    </location>
</feature>
<feature type="sequence variant" id="VAR_083393" description="In MC4DN1; uncertain significance; dbSNP:rs863224228." evidence="16">
    <location>
        <begin position="105"/>
        <end position="300"/>
    </location>
</feature>
<feature type="sequence variant" id="VAR_007450" description="In MC4DN1; reduced protein stability; dbSNP:rs28933402." evidence="5 8">
    <original>G</original>
    <variation>E</variation>
    <location>
        <position position="124"/>
    </location>
</feature>
<feature type="sequence variant" id="VAR_015258" description="In MC4DN1; dbSNP:rs782033035." evidence="3 6">
    <original>G</original>
    <variation>R</variation>
    <location>
        <position position="124"/>
    </location>
</feature>
<feature type="sequence variant" id="VAR_068650" description="In MC4DN1." evidence="12">
    <original>V</original>
    <variation>G</variation>
    <location>
        <position position="177"/>
    </location>
</feature>
<feature type="sequence variant" id="VAR_083394" description="In MC4DN1; uncertain significance; reduces protein stability; impairs complex IV assembly; dbSNP:rs587753385." evidence="17">
    <original>N</original>
    <variation>Y</variation>
    <location>
        <position position="178"/>
    </location>
</feature>
<feature type="sequence variant" id="VAR_076315" description="In CMT4K; uncertain significance; dbSNP:rs782190413." evidence="13">
    <original>R</original>
    <variation>W</variation>
    <location>
        <position position="192"/>
    </location>
</feature>
<feature type="sequence variant" id="VAR_007451" description="In dbSNP:rs72619327." evidence="5 8">
    <original>D</original>
    <variation>H</variation>
    <location>
        <position position="202"/>
    </location>
</feature>
<feature type="sequence variant" id="VAR_068651" description="In MC4DN1." evidence="12">
    <original>G</original>
    <variation>E</variation>
    <location>
        <position position="205"/>
    </location>
</feature>
<feature type="sequence variant" id="VAR_068682" description="In MC4DN1; uncertain significance; dbSNP:rs398122806." evidence="10">
    <original>W</original>
    <variation>R</variation>
    <location>
        <position position="227"/>
    </location>
</feature>
<feature type="sequence variant" id="VAR_068652" description="In MC4DN1; dbSNP:rs1319811735." evidence="7">
    <original>M</original>
    <variation>T</variation>
    <location>
        <position position="235"/>
    </location>
</feature>
<feature type="sequence variant" id="VAR_007452" description="In MC4DN1." evidence="5 8">
    <original>I</original>
    <variation>T</variation>
    <location>
        <position position="246"/>
    </location>
</feature>
<feature type="sequence variant" id="VAR_068653" description="In MC4DN1." evidence="11">
    <original>A</original>
    <variation>D</variation>
    <location>
        <position position="248"/>
    </location>
</feature>
<feature type="sequence variant" id="VAR_068654" description="In MC4DN1." evidence="12">
    <original>G</original>
    <variation>R</variation>
    <location>
        <position position="257"/>
    </location>
</feature>
<feature type="sequence variant" id="VAR_083395" description="In MC4DN1; dbSNP:rs1030336089." evidence="15">
    <original>G</original>
    <variation>V</variation>
    <location>
        <position position="257"/>
    </location>
</feature>
<feature type="sequence variant" id="VAR_083396" description="In MC4DN1; uncertain significance; reduces protein stability; impairs complex IV assembly." evidence="17">
    <original>P</original>
    <variation>S</variation>
    <location>
        <position position="258"/>
    </location>
</feature>
<feature type="sequence variant" id="VAR_083397" description="In MC4DN1; uncertain significance; reduces protein stability; impairs complex IV assembly; dbSNP:rs782161777." evidence="17">
    <original>E</original>
    <variation>EHLQYE</variation>
    <location>
        <position position="270"/>
    </location>
</feature>
<feature type="sequence variant" id="VAR_015259" description="In MC4DN1; dbSNP:rs121918658." evidence="4">
    <original>Y</original>
    <variation>D</variation>
    <location>
        <position position="274"/>
    </location>
</feature>
<gene>
    <name type="primary">SURF1</name>
    <name type="synonym">SURF-1</name>
</gene>
<keyword id="KW-0025">Alternative splicing</keyword>
<keyword id="KW-0144">Charcot-Marie-Tooth disease</keyword>
<keyword id="KW-0225">Disease variant</keyword>
<keyword id="KW-0431">Leigh syndrome</keyword>
<keyword id="KW-0472">Membrane</keyword>
<keyword id="KW-0496">Mitochondrion</keyword>
<keyword id="KW-0999">Mitochondrion inner membrane</keyword>
<keyword id="KW-0523">Neurodegeneration</keyword>
<keyword id="KW-0622">Neuropathy</keyword>
<keyword id="KW-1274">Primary mitochondrial disease</keyword>
<keyword id="KW-1267">Proteomics identification</keyword>
<keyword id="KW-1185">Reference proteome</keyword>
<keyword id="KW-0812">Transmembrane</keyword>
<keyword id="KW-1133">Transmembrane helix</keyword>
<protein>
    <recommendedName>
        <fullName>Surfeit locus protein 1</fullName>
    </recommendedName>
</protein>
<name>SURF1_HUMAN</name>
<comment type="function">
    <text evidence="13 18 20">Component of the MITRAC (mitochondrial translation regulation assembly intermediate of cytochrome c oxidase complex) complex, that regulates cytochrome c oxidase assembly.</text>
</comment>
<comment type="subunit">
    <text evidence="14">Component of the MITRAC (mitochondrial translation regulation assembly intermediate of cytochrome c oxidase complex) complex, the core components of this complex being COA3/MITRAC12 and COX14. Interacts with COA3.</text>
</comment>
<comment type="interaction">
    <interactant intactId="EBI-3915286">
        <id>Q15526</id>
    </interactant>
    <interactant intactId="EBI-6570446">
        <id>Q9Y2R0</id>
        <label>COA3</label>
    </interactant>
    <organismsDiffer>false</organismsDiffer>
    <experiments>6</experiments>
</comment>
<comment type="subcellular location">
    <subcellularLocation>
        <location evidence="1">Mitochondrion inner membrane</location>
        <topology evidence="2">Multi-pass membrane protein</topology>
    </subcellularLocation>
</comment>
<comment type="alternative products">
    <event type="alternative splicing"/>
    <isoform>
        <id>Q15526-1</id>
        <name>1</name>
        <sequence type="displayed"/>
    </isoform>
    <isoform>
        <id>Q15526-2</id>
        <name>2</name>
        <sequence type="described" ref="VSP_034817"/>
    </isoform>
</comment>
<comment type="developmental stage">
    <text evidence="8">Expressed in the fetus (at protein level).</text>
</comment>
<comment type="disease" evidence="3 4 5 6 7 8 10 11 12 15 16 17 18">
    <disease id="DI-05950">
        <name>Mitochondrial complex IV deficiency, nuclear type 1</name>
        <acronym>MC4DN1</acronym>
        <description>An autosomal recessive disorder of the mitochondrial respiratory chain characterized by early-onset, rapidly progressive encephalopathy, neurodegeneration, and loss of motor and cognitive skills. Affected individuals show hypotonia, failure to thrive, loss of the ability to sit or walk, poor communication, poor eye contact, oculomotor abnormalities, as well as deafness, ataxia, tremor, and brisk tendon reflexes. Brain imaging shows bilateral symmetric lesions in the basal ganglia. Lactate levels in serum and cerebrospinal fluid are increased. Patient tissues show decreased levels and activity of mitochondrial respiratory complex IV. Death in childhood may occur, often due to central respiratory failure.</description>
        <dbReference type="MIM" id="220110"/>
    </disease>
    <text>The disease is caused by variants affecting the gene represented in this entry.</text>
</comment>
<comment type="disease" evidence="13">
    <disease id="DI-04591">
        <name>Charcot-Marie-Tooth disease, demyelinating, type 4K</name>
        <acronym>CMT4K</acronym>
        <description>An autosomal recessive, demyelinating form of Charcot-Marie-Tooth disease, a disorder of the peripheral nervous system, characterized by progressive weakness and atrophy, initially of the peroneal muscles and later of the distal muscles of the arms. Charcot-Marie-Tooth disease is classified in two main groups on the basis of electrophysiologic properties and histopathology: primary peripheral demyelinating neuropathies (designated CMT1 when they are dominantly inherited) and primary peripheral axonal neuropathies (CMT2). Demyelinating neuropathies are characterized by severely reduced nerve conduction velocities (less than 38 m/sec), segmental demyelination and remyelination with onion bulb formations on nerve biopsy, slowly progressive distal muscle atrophy and weakness, absent deep tendon reflexes, and hollow feet. By convention autosomal recessive forms of demyelinating Charcot-Marie-Tooth disease are designated CMT4. CMT4K patients manifest upper and lower limbs involvement. Some affected individuals have nystagmus and late-onset cerebellar ataxia.</description>
        <dbReference type="MIM" id="616684"/>
    </disease>
    <text>The disease is caused by variants affecting the gene represented in this entry.</text>
</comment>
<comment type="similarity">
    <text evidence="19">Belongs to the SURF1 family.</text>
</comment>
<comment type="online information" name="Surfeit 1 (SURF1)">
    <link uri="https://databases.lovd.nl/shared/genes/SURF1"/>
    <text>Leiden Open Variation Database (LOVD)</text>
</comment>
<proteinExistence type="evidence at protein level"/>
<dbReference type="EMBL" id="Z35093">
    <property type="protein sequence ID" value="CAA84476.1"/>
    <property type="molecule type" value="mRNA"/>
</dbReference>
<dbReference type="EMBL" id="AK291122">
    <property type="protein sequence ID" value="BAF83811.1"/>
    <property type="molecule type" value="mRNA"/>
</dbReference>
<dbReference type="EMBL" id="AL158826">
    <property type="protein sequence ID" value="CAI12836.1"/>
    <property type="molecule type" value="Genomic_DNA"/>
</dbReference>
<dbReference type="EMBL" id="AL158826">
    <property type="protein sequence ID" value="CAI12837.1"/>
    <property type="molecule type" value="Genomic_DNA"/>
</dbReference>
<dbReference type="EMBL" id="BC028314">
    <property type="protein sequence ID" value="AAH28314.1"/>
    <property type="molecule type" value="mRNA"/>
</dbReference>
<dbReference type="EMBL" id="BC071658">
    <property type="protein sequence ID" value="AAH71658.1"/>
    <property type="molecule type" value="mRNA"/>
</dbReference>
<dbReference type="CCDS" id="CCDS6966.1">
    <molecule id="Q15526-1"/>
</dbReference>
<dbReference type="PIR" id="S57749">
    <property type="entry name" value="S57749"/>
</dbReference>
<dbReference type="RefSeq" id="NP_001267716.1">
    <property type="nucleotide sequence ID" value="NM_001280787.1"/>
</dbReference>
<dbReference type="RefSeq" id="NP_003163.1">
    <molecule id="Q15526-1"/>
    <property type="nucleotide sequence ID" value="NM_003172.4"/>
</dbReference>
<dbReference type="SMR" id="Q15526"/>
<dbReference type="BioGRID" id="112701">
    <property type="interactions" value="197"/>
</dbReference>
<dbReference type="CORUM" id="Q15526"/>
<dbReference type="FunCoup" id="Q15526">
    <property type="interactions" value="1211"/>
</dbReference>
<dbReference type="IntAct" id="Q15526">
    <property type="interactions" value="35"/>
</dbReference>
<dbReference type="STRING" id="9606.ENSP00000361042"/>
<dbReference type="BindingDB" id="Q15526"/>
<dbReference type="GlyGen" id="Q15526">
    <property type="glycosylation" value="1 site, 1 O-linked glycan (1 site)"/>
</dbReference>
<dbReference type="iPTMnet" id="Q15526"/>
<dbReference type="MetOSite" id="Q15526"/>
<dbReference type="PhosphoSitePlus" id="Q15526"/>
<dbReference type="BioMuta" id="SURF1"/>
<dbReference type="DMDM" id="2498973"/>
<dbReference type="jPOST" id="Q15526"/>
<dbReference type="MassIVE" id="Q15526"/>
<dbReference type="PaxDb" id="9606-ENSP00000361042"/>
<dbReference type="PeptideAtlas" id="Q15526"/>
<dbReference type="ProteomicsDB" id="60616">
    <molecule id="Q15526-1"/>
</dbReference>
<dbReference type="ProteomicsDB" id="60617">
    <molecule id="Q15526-2"/>
</dbReference>
<dbReference type="Pumba" id="Q15526"/>
<dbReference type="Antibodypedia" id="18363">
    <property type="antibodies" value="161 antibodies from 29 providers"/>
</dbReference>
<dbReference type="DNASU" id="6834"/>
<dbReference type="Ensembl" id="ENST00000371974.8">
    <molecule id="Q15526-1"/>
    <property type="protein sequence ID" value="ENSP00000361042.3"/>
    <property type="gene ID" value="ENSG00000148290.10"/>
</dbReference>
<dbReference type="Ensembl" id="ENST00000626663.3">
    <molecule id="Q15526-1"/>
    <property type="protein sequence ID" value="ENSP00000487158.1"/>
    <property type="gene ID" value="ENSG00000280627.3"/>
</dbReference>
<dbReference type="GeneID" id="6834"/>
<dbReference type="KEGG" id="hsa:6834"/>
<dbReference type="MANE-Select" id="ENST00000371974.8">
    <property type="protein sequence ID" value="ENSP00000361042.3"/>
    <property type="RefSeq nucleotide sequence ID" value="NM_003172.4"/>
    <property type="RefSeq protein sequence ID" value="NP_003163.1"/>
</dbReference>
<dbReference type="UCSC" id="uc004cdh.3">
    <molecule id="Q15526-1"/>
    <property type="organism name" value="human"/>
</dbReference>
<dbReference type="AGR" id="HGNC:11474"/>
<dbReference type="CTD" id="6834"/>
<dbReference type="DisGeNET" id="6834"/>
<dbReference type="GeneCards" id="SURF1"/>
<dbReference type="GeneReviews" id="SURF1"/>
<dbReference type="HGNC" id="HGNC:11474">
    <property type="gene designation" value="SURF1"/>
</dbReference>
<dbReference type="HPA" id="ENSG00000148290">
    <property type="expression patterns" value="Low tissue specificity"/>
</dbReference>
<dbReference type="MalaCards" id="SURF1"/>
<dbReference type="MIM" id="185620">
    <property type="type" value="gene"/>
</dbReference>
<dbReference type="MIM" id="220110">
    <property type="type" value="phenotype"/>
</dbReference>
<dbReference type="MIM" id="616684">
    <property type="type" value="phenotype"/>
</dbReference>
<dbReference type="neXtProt" id="NX_Q15526"/>
<dbReference type="OpenTargets" id="ENSG00000148290"/>
<dbReference type="Orphanet" id="391351">
    <property type="disease" value="SURF1-related Charcot-Marie-Tooth disease type 4"/>
</dbReference>
<dbReference type="PharmGKB" id="PA36259"/>
<dbReference type="VEuPathDB" id="HostDB:ENSG00000148290"/>
<dbReference type="eggNOG" id="KOG1563">
    <property type="taxonomic scope" value="Eukaryota"/>
</dbReference>
<dbReference type="GeneTree" id="ENSGT00530000064194"/>
<dbReference type="InParanoid" id="Q15526"/>
<dbReference type="OMA" id="WYSRDVA"/>
<dbReference type="OrthoDB" id="10040024at2759"/>
<dbReference type="PAN-GO" id="Q15526">
    <property type="GO annotations" value="2 GO annotations based on evolutionary models"/>
</dbReference>
<dbReference type="PhylomeDB" id="Q15526"/>
<dbReference type="TreeFam" id="TF314684"/>
<dbReference type="PathwayCommons" id="Q15526"/>
<dbReference type="Reactome" id="R-HSA-9864848">
    <property type="pathway name" value="Complex IV assembly"/>
</dbReference>
<dbReference type="SignaLink" id="Q15526"/>
<dbReference type="SIGNOR" id="Q15526"/>
<dbReference type="BioGRID-ORCS" id="6834">
    <property type="hits" value="54 hits in 1155 CRISPR screens"/>
</dbReference>
<dbReference type="GeneWiki" id="SURF1"/>
<dbReference type="GenomeRNAi" id="6834"/>
<dbReference type="Pharos" id="Q15526">
    <property type="development level" value="Tbio"/>
</dbReference>
<dbReference type="PRO" id="PR:Q15526"/>
<dbReference type="Proteomes" id="UP000005640">
    <property type="component" value="Chromosome 9"/>
</dbReference>
<dbReference type="RNAct" id="Q15526">
    <property type="molecule type" value="protein"/>
</dbReference>
<dbReference type="Bgee" id="ENSG00000148290">
    <property type="expression patterns" value="Expressed in apex of heart and 109 other cell types or tissues"/>
</dbReference>
<dbReference type="ExpressionAtlas" id="Q15526">
    <property type="expression patterns" value="baseline and differential"/>
</dbReference>
<dbReference type="GO" id="GO:0005743">
    <property type="term" value="C:mitochondrial inner membrane"/>
    <property type="evidence" value="ECO:0000304"/>
    <property type="project" value="Reactome"/>
</dbReference>
<dbReference type="GO" id="GO:0005739">
    <property type="term" value="C:mitochondrion"/>
    <property type="evidence" value="ECO:0006056"/>
    <property type="project" value="FlyBase"/>
</dbReference>
<dbReference type="GO" id="GO:0098803">
    <property type="term" value="C:respiratory chain complex"/>
    <property type="evidence" value="ECO:0000304"/>
    <property type="project" value="ProtInc"/>
</dbReference>
<dbReference type="GO" id="GO:0004129">
    <property type="term" value="F:cytochrome-c oxidase activity"/>
    <property type="evidence" value="ECO:0007669"/>
    <property type="project" value="Ensembl"/>
</dbReference>
<dbReference type="GO" id="GO:0009060">
    <property type="term" value="P:aerobic respiration"/>
    <property type="evidence" value="ECO:0000304"/>
    <property type="project" value="ProtInc"/>
</dbReference>
<dbReference type="GO" id="GO:0033617">
    <property type="term" value="P:mitochondrial cytochrome c oxidase assembly"/>
    <property type="evidence" value="ECO:0000315"/>
    <property type="project" value="UniProtKB"/>
</dbReference>
<dbReference type="GO" id="GO:0008535">
    <property type="term" value="P:respiratory chain complex IV assembly"/>
    <property type="evidence" value="ECO:0000304"/>
    <property type="project" value="ProtInc"/>
</dbReference>
<dbReference type="CDD" id="cd06662">
    <property type="entry name" value="SURF1"/>
    <property type="match status" value="1"/>
</dbReference>
<dbReference type="InterPro" id="IPR002994">
    <property type="entry name" value="Surf1/Shy1"/>
</dbReference>
<dbReference type="InterPro" id="IPR045214">
    <property type="entry name" value="Surf1/Surf4"/>
</dbReference>
<dbReference type="PANTHER" id="PTHR23427">
    <property type="entry name" value="SURFEIT LOCUS PROTEIN"/>
    <property type="match status" value="1"/>
</dbReference>
<dbReference type="PANTHER" id="PTHR23427:SF2">
    <property type="entry name" value="SURFEIT LOCUS PROTEIN 1"/>
    <property type="match status" value="1"/>
</dbReference>
<dbReference type="Pfam" id="PF02104">
    <property type="entry name" value="SURF1"/>
    <property type="match status" value="1"/>
</dbReference>
<dbReference type="PROSITE" id="PS50895">
    <property type="entry name" value="SURF1"/>
    <property type="match status" value="1"/>
</dbReference>
<evidence type="ECO:0000250" key="1">
    <source>
        <dbReference type="UniProtKB" id="P09925"/>
    </source>
</evidence>
<evidence type="ECO:0000255" key="2"/>
<evidence type="ECO:0000269" key="3">
    <source>
    </source>
</evidence>
<evidence type="ECO:0000269" key="4">
    <source>
    </source>
</evidence>
<evidence type="ECO:0000269" key="5">
    <source>
    </source>
</evidence>
<evidence type="ECO:0000269" key="6">
    <source>
    </source>
</evidence>
<evidence type="ECO:0000269" key="7">
    <source>
    </source>
</evidence>
<evidence type="ECO:0000269" key="8">
    <source>
    </source>
</evidence>
<evidence type="ECO:0000269" key="9">
    <source>
    </source>
</evidence>
<evidence type="ECO:0000269" key="10">
    <source>
    </source>
</evidence>
<evidence type="ECO:0000269" key="11">
    <source>
    </source>
</evidence>
<evidence type="ECO:0000269" key="12">
    <source>
    </source>
</evidence>
<evidence type="ECO:0000269" key="13">
    <source>
    </source>
</evidence>
<evidence type="ECO:0000269" key="14">
    <source>
    </source>
</evidence>
<evidence type="ECO:0000269" key="15">
    <source>
    </source>
</evidence>
<evidence type="ECO:0000269" key="16">
    <source>
    </source>
</evidence>
<evidence type="ECO:0000269" key="17">
    <source>
    </source>
</evidence>
<evidence type="ECO:0000269" key="18">
    <source>
    </source>
</evidence>
<evidence type="ECO:0000305" key="19"/>
<evidence type="ECO:0000305" key="20">
    <source>
    </source>
</evidence>